<keyword id="KW-0963">Cytoplasm</keyword>
<keyword id="KW-0479">Metal-binding</keyword>
<keyword id="KW-0539">Nucleus</keyword>
<keyword id="KW-1185">Reference proteome</keyword>
<keyword id="KW-0690">Ribosome biogenesis</keyword>
<keyword id="KW-0862">Zinc</keyword>
<keyword id="KW-0863">Zinc-finger</keyword>
<accession>Q9P370</accession>
<protein>
    <recommendedName>
        <fullName>Zinc finger protein bud20</fullName>
    </recommendedName>
</protein>
<comment type="function">
    <text evidence="1">Involved in pre-60S ribosomal particles maturation by promoting the nuclear export of the 60S ribosome.</text>
</comment>
<comment type="subunit">
    <text evidence="1">Associates with pre-60S ribosomal particles.</text>
</comment>
<comment type="subcellular location">
    <subcellularLocation>
        <location evidence="4">Nucleus</location>
        <location evidence="4">Nucleolus</location>
    </subcellularLocation>
    <subcellularLocation>
        <location evidence="1">Cytoplasm</location>
    </subcellularLocation>
    <text evidence="1">Shuttles between the nucleus and the cytoplasm.</text>
</comment>
<comment type="similarity">
    <text evidence="2">Belongs to the ZNF593/BUD20 C2H2-type zinc-finger protein family.</text>
</comment>
<sequence length="124" mass="14148">MGRVARKRKHHSNGNHALFRTRVYGRDLDQIHNDLTESEKFDKLPIDPDLPGLGQHYCIECARYFDSSQALLVHKKGKVHKRRLKNLREEPYTQEEAEAAVNIGQPKQSVASKLADNSNVVMAD</sequence>
<proteinExistence type="inferred from homology"/>
<feature type="chain" id="PRO_0000351142" description="Zinc finger protein bud20">
    <location>
        <begin position="1"/>
        <end position="124"/>
    </location>
</feature>
<feature type="zinc finger region" description="C2H2-type" evidence="3">
    <location>
        <begin position="56"/>
        <end position="80"/>
    </location>
</feature>
<reference evidence="6" key="1">
    <citation type="journal article" date="2002" name="Nature">
        <title>The genome sequence of Schizosaccharomyces pombe.</title>
        <authorList>
            <person name="Wood V."/>
            <person name="Gwilliam R."/>
            <person name="Rajandream M.A."/>
            <person name="Lyne M.H."/>
            <person name="Lyne R."/>
            <person name="Stewart A."/>
            <person name="Sgouros J.G."/>
            <person name="Peat N."/>
            <person name="Hayles J."/>
            <person name="Baker S.G."/>
            <person name="Basham D."/>
            <person name="Bowman S."/>
            <person name="Brooks K."/>
            <person name="Brown D."/>
            <person name="Brown S."/>
            <person name="Chillingworth T."/>
            <person name="Churcher C.M."/>
            <person name="Collins M."/>
            <person name="Connor R."/>
            <person name="Cronin A."/>
            <person name="Davis P."/>
            <person name="Feltwell T."/>
            <person name="Fraser A."/>
            <person name="Gentles S."/>
            <person name="Goble A."/>
            <person name="Hamlin N."/>
            <person name="Harris D.E."/>
            <person name="Hidalgo J."/>
            <person name="Hodgson G."/>
            <person name="Holroyd S."/>
            <person name="Hornsby T."/>
            <person name="Howarth S."/>
            <person name="Huckle E.J."/>
            <person name="Hunt S."/>
            <person name="Jagels K."/>
            <person name="James K.D."/>
            <person name="Jones L."/>
            <person name="Jones M."/>
            <person name="Leather S."/>
            <person name="McDonald S."/>
            <person name="McLean J."/>
            <person name="Mooney P."/>
            <person name="Moule S."/>
            <person name="Mungall K.L."/>
            <person name="Murphy L.D."/>
            <person name="Niblett D."/>
            <person name="Odell C."/>
            <person name="Oliver K."/>
            <person name="O'Neil S."/>
            <person name="Pearson D."/>
            <person name="Quail M.A."/>
            <person name="Rabbinowitsch E."/>
            <person name="Rutherford K.M."/>
            <person name="Rutter S."/>
            <person name="Saunders D."/>
            <person name="Seeger K."/>
            <person name="Sharp S."/>
            <person name="Skelton J."/>
            <person name="Simmonds M.N."/>
            <person name="Squares R."/>
            <person name="Squares S."/>
            <person name="Stevens K."/>
            <person name="Taylor K."/>
            <person name="Taylor R.G."/>
            <person name="Tivey A."/>
            <person name="Walsh S.V."/>
            <person name="Warren T."/>
            <person name="Whitehead S."/>
            <person name="Woodward J.R."/>
            <person name="Volckaert G."/>
            <person name="Aert R."/>
            <person name="Robben J."/>
            <person name="Grymonprez B."/>
            <person name="Weltjens I."/>
            <person name="Vanstreels E."/>
            <person name="Rieger M."/>
            <person name="Schaefer M."/>
            <person name="Mueller-Auer S."/>
            <person name="Gabel C."/>
            <person name="Fuchs M."/>
            <person name="Duesterhoeft A."/>
            <person name="Fritzc C."/>
            <person name="Holzer E."/>
            <person name="Moestl D."/>
            <person name="Hilbert H."/>
            <person name="Borzym K."/>
            <person name="Langer I."/>
            <person name="Beck A."/>
            <person name="Lehrach H."/>
            <person name="Reinhardt R."/>
            <person name="Pohl T.M."/>
            <person name="Eger P."/>
            <person name="Zimmermann W."/>
            <person name="Wedler H."/>
            <person name="Wambutt R."/>
            <person name="Purnelle B."/>
            <person name="Goffeau A."/>
            <person name="Cadieu E."/>
            <person name="Dreano S."/>
            <person name="Gloux S."/>
            <person name="Lelaure V."/>
            <person name="Mottier S."/>
            <person name="Galibert F."/>
            <person name="Aves S.J."/>
            <person name="Xiang Z."/>
            <person name="Hunt C."/>
            <person name="Moore K."/>
            <person name="Hurst S.M."/>
            <person name="Lucas M."/>
            <person name="Rochet M."/>
            <person name="Gaillardin C."/>
            <person name="Tallada V.A."/>
            <person name="Garzon A."/>
            <person name="Thode G."/>
            <person name="Daga R.R."/>
            <person name="Cruzado L."/>
            <person name="Jimenez J."/>
            <person name="Sanchez M."/>
            <person name="del Rey F."/>
            <person name="Benito J."/>
            <person name="Dominguez A."/>
            <person name="Revuelta J.L."/>
            <person name="Moreno S."/>
            <person name="Armstrong J."/>
            <person name="Forsburg S.L."/>
            <person name="Cerutti L."/>
            <person name="Lowe T."/>
            <person name="McCombie W.R."/>
            <person name="Paulsen I."/>
            <person name="Potashkin J."/>
            <person name="Shpakovski G.V."/>
            <person name="Ussery D."/>
            <person name="Barrell B.G."/>
            <person name="Nurse P."/>
        </authorList>
    </citation>
    <scope>NUCLEOTIDE SEQUENCE [LARGE SCALE GENOMIC DNA]</scope>
    <source>
        <strain>972 / ATCC 24843</strain>
    </source>
</reference>
<reference evidence="5" key="2">
    <citation type="journal article" date="2006" name="Nat. Biotechnol.">
        <title>ORFeome cloning and global analysis of protein localization in the fission yeast Schizosaccharomyces pombe.</title>
        <authorList>
            <person name="Matsuyama A."/>
            <person name="Arai R."/>
            <person name="Yashiroda Y."/>
            <person name="Shirai A."/>
            <person name="Kamata A."/>
            <person name="Sekido S."/>
            <person name="Kobayashi Y."/>
            <person name="Hashimoto A."/>
            <person name="Hamamoto M."/>
            <person name="Hiraoka Y."/>
            <person name="Horinouchi S."/>
            <person name="Yoshida M."/>
        </authorList>
    </citation>
    <scope>SUBCELLULAR LOCATION [LARGE SCALE ANALYSIS]</scope>
</reference>
<evidence type="ECO:0000250" key="1">
    <source>
        <dbReference type="UniProtKB" id="Q08004"/>
    </source>
</evidence>
<evidence type="ECO:0000255" key="2"/>
<evidence type="ECO:0000255" key="3">
    <source>
        <dbReference type="PROSITE-ProRule" id="PRU00042"/>
    </source>
</evidence>
<evidence type="ECO:0000269" key="4">
    <source>
    </source>
</evidence>
<evidence type="ECO:0000305" key="5"/>
<evidence type="ECO:0000312" key="6">
    <source>
        <dbReference type="EMBL" id="CAC00559.1"/>
    </source>
</evidence>
<name>BUD20_SCHPO</name>
<gene>
    <name type="primary">bud20</name>
    <name type="ORF">SPAC19B12.11c</name>
</gene>
<dbReference type="EMBL" id="CU329670">
    <property type="protein sequence ID" value="CAC00559.1"/>
    <property type="molecule type" value="Genomic_DNA"/>
</dbReference>
<dbReference type="RefSeq" id="NP_594774.1">
    <property type="nucleotide sequence ID" value="NM_001020201.2"/>
</dbReference>
<dbReference type="SMR" id="Q9P370"/>
<dbReference type="BioGRID" id="278923">
    <property type="interactions" value="111"/>
</dbReference>
<dbReference type="FunCoup" id="Q9P370">
    <property type="interactions" value="250"/>
</dbReference>
<dbReference type="STRING" id="284812.Q9P370"/>
<dbReference type="PaxDb" id="4896-SPAC19B12.11c.1"/>
<dbReference type="EnsemblFungi" id="SPAC19B12.11c.1">
    <property type="protein sequence ID" value="SPAC19B12.11c.1:pep"/>
    <property type="gene ID" value="SPAC19B12.11c"/>
</dbReference>
<dbReference type="GeneID" id="2542462"/>
<dbReference type="KEGG" id="spo:2542462"/>
<dbReference type="PomBase" id="SPAC19B12.11c">
    <property type="gene designation" value="bud20"/>
</dbReference>
<dbReference type="VEuPathDB" id="FungiDB:SPAC19B12.11c"/>
<dbReference type="eggNOG" id="KOG3408">
    <property type="taxonomic scope" value="Eukaryota"/>
</dbReference>
<dbReference type="HOGENOM" id="CLU_117291_1_1_1"/>
<dbReference type="InParanoid" id="Q9P370"/>
<dbReference type="OMA" id="RKMETQP"/>
<dbReference type="PhylomeDB" id="Q9P370"/>
<dbReference type="PRO" id="PR:Q9P370"/>
<dbReference type="Proteomes" id="UP000002485">
    <property type="component" value="Chromosome I"/>
</dbReference>
<dbReference type="GO" id="GO:0005737">
    <property type="term" value="C:cytoplasm"/>
    <property type="evidence" value="ECO:0007669"/>
    <property type="project" value="UniProtKB-SubCell"/>
</dbReference>
<dbReference type="GO" id="GO:0005730">
    <property type="term" value="C:nucleolus"/>
    <property type="evidence" value="ECO:0007005"/>
    <property type="project" value="PomBase"/>
</dbReference>
<dbReference type="GO" id="GO:0005634">
    <property type="term" value="C:nucleus"/>
    <property type="evidence" value="ECO:0007005"/>
    <property type="project" value="PomBase"/>
</dbReference>
<dbReference type="GO" id="GO:0003676">
    <property type="term" value="F:nucleic acid binding"/>
    <property type="evidence" value="ECO:0007669"/>
    <property type="project" value="InterPro"/>
</dbReference>
<dbReference type="GO" id="GO:0008270">
    <property type="term" value="F:zinc ion binding"/>
    <property type="evidence" value="ECO:0007669"/>
    <property type="project" value="UniProtKB-KW"/>
</dbReference>
<dbReference type="GO" id="GO:0042254">
    <property type="term" value="P:ribosome biogenesis"/>
    <property type="evidence" value="ECO:0000266"/>
    <property type="project" value="PomBase"/>
</dbReference>
<dbReference type="FunFam" id="3.30.160.60:FF:000299">
    <property type="entry name" value="Zinc finger protein 593"/>
    <property type="match status" value="1"/>
</dbReference>
<dbReference type="Gene3D" id="3.30.160.60">
    <property type="entry name" value="Classic Zinc Finger"/>
    <property type="match status" value="1"/>
</dbReference>
<dbReference type="InterPro" id="IPR051879">
    <property type="entry name" value="C2H2-ZF_Maturation_Protein"/>
</dbReference>
<dbReference type="InterPro" id="IPR003604">
    <property type="entry name" value="Matrin/U1-like-C_Znf_C2H2"/>
</dbReference>
<dbReference type="InterPro" id="IPR022755">
    <property type="entry name" value="Znf_C2H2_jaz"/>
</dbReference>
<dbReference type="InterPro" id="IPR036236">
    <property type="entry name" value="Znf_C2H2_sf"/>
</dbReference>
<dbReference type="InterPro" id="IPR013087">
    <property type="entry name" value="Znf_C2H2_type"/>
</dbReference>
<dbReference type="PANTHER" id="PTHR46095">
    <property type="entry name" value="ZINC FINGER PROTEIN 593"/>
    <property type="match status" value="1"/>
</dbReference>
<dbReference type="PANTHER" id="PTHR46095:SF1">
    <property type="entry name" value="ZINC FINGER PROTEIN 593"/>
    <property type="match status" value="1"/>
</dbReference>
<dbReference type="Pfam" id="PF12171">
    <property type="entry name" value="zf-C2H2_jaz"/>
    <property type="match status" value="1"/>
</dbReference>
<dbReference type="SMART" id="SM00451">
    <property type="entry name" value="ZnF_U1"/>
    <property type="match status" value="1"/>
</dbReference>
<dbReference type="SUPFAM" id="SSF57667">
    <property type="entry name" value="beta-beta-alpha zinc fingers"/>
    <property type="match status" value="1"/>
</dbReference>
<dbReference type="PROSITE" id="PS00028">
    <property type="entry name" value="ZINC_FINGER_C2H2_1"/>
    <property type="match status" value="1"/>
</dbReference>
<dbReference type="PROSITE" id="PS50157">
    <property type="entry name" value="ZINC_FINGER_C2H2_2"/>
    <property type="match status" value="1"/>
</dbReference>
<organism>
    <name type="scientific">Schizosaccharomyces pombe (strain 972 / ATCC 24843)</name>
    <name type="common">Fission yeast</name>
    <dbReference type="NCBI Taxonomy" id="284812"/>
    <lineage>
        <taxon>Eukaryota</taxon>
        <taxon>Fungi</taxon>
        <taxon>Dikarya</taxon>
        <taxon>Ascomycota</taxon>
        <taxon>Taphrinomycotina</taxon>
        <taxon>Schizosaccharomycetes</taxon>
        <taxon>Schizosaccharomycetales</taxon>
        <taxon>Schizosaccharomycetaceae</taxon>
        <taxon>Schizosaccharomyces</taxon>
    </lineage>
</organism>